<dbReference type="EC" id="2.3.1.288" evidence="1"/>
<dbReference type="EMBL" id="LT708304">
    <property type="protein sequence ID" value="SIU02479.1"/>
    <property type="molecule type" value="Genomic_DNA"/>
</dbReference>
<dbReference type="RefSeq" id="NP_857487.1">
    <property type="nucleotide sequence ID" value="NC_002945.3"/>
</dbReference>
<dbReference type="RefSeq" id="WP_010950943.1">
    <property type="nucleotide sequence ID" value="NC_002945.4"/>
</dbReference>
<dbReference type="SMR" id="Q7TVL3"/>
<dbReference type="KEGG" id="mbo:BQ2027_MB3850C"/>
<dbReference type="PATRIC" id="fig|233413.5.peg.4210"/>
<dbReference type="Proteomes" id="UP000001419">
    <property type="component" value="Chromosome"/>
</dbReference>
<dbReference type="GO" id="GO:0016746">
    <property type="term" value="F:acyltransferase activity"/>
    <property type="evidence" value="ECO:0007669"/>
    <property type="project" value="UniProtKB-KW"/>
</dbReference>
<dbReference type="GO" id="GO:0071555">
    <property type="term" value="P:cell wall organization"/>
    <property type="evidence" value="ECO:0007669"/>
    <property type="project" value="UniProtKB-KW"/>
</dbReference>
<dbReference type="GO" id="GO:0008610">
    <property type="term" value="P:lipid biosynthetic process"/>
    <property type="evidence" value="ECO:0007669"/>
    <property type="project" value="UniProtKB-ARBA"/>
</dbReference>
<dbReference type="FunFam" id="3.30.559.10:FF:000022">
    <property type="entry name" value="Trehalose-2-sulfate acyltransferase papA2"/>
    <property type="match status" value="1"/>
</dbReference>
<dbReference type="FunFam" id="3.30.559.30:FF:000007">
    <property type="entry name" value="Trehalose-2-sulfate acyltransferase papA2"/>
    <property type="match status" value="1"/>
</dbReference>
<dbReference type="Gene3D" id="3.30.559.10">
    <property type="entry name" value="Chloramphenicol acetyltransferase-like domain"/>
    <property type="match status" value="1"/>
</dbReference>
<dbReference type="Gene3D" id="3.30.559.30">
    <property type="entry name" value="Nonribosomal peptide synthetase, condensation domain"/>
    <property type="match status" value="1"/>
</dbReference>
<dbReference type="InterPro" id="IPR023213">
    <property type="entry name" value="CAT-like_dom_sf"/>
</dbReference>
<dbReference type="InterPro" id="IPR001242">
    <property type="entry name" value="Condensatn"/>
</dbReference>
<dbReference type="Pfam" id="PF00668">
    <property type="entry name" value="Condensation"/>
    <property type="match status" value="1"/>
</dbReference>
<dbReference type="SUPFAM" id="SSF52777">
    <property type="entry name" value="CoA-dependent acyltransferases"/>
    <property type="match status" value="2"/>
</dbReference>
<evidence type="ECO:0000250" key="1">
    <source>
        <dbReference type="UniProtKB" id="P9WIK7"/>
    </source>
</evidence>
<evidence type="ECO:0000305" key="2"/>
<proteinExistence type="inferred from homology"/>
<gene>
    <name type="primary">papA2</name>
    <name type="ordered locus">BQ2027_MB3850C</name>
</gene>
<name>PAPA2_MYCBO</name>
<accession>Q7TVL3</accession>
<accession>A0A1R3Y5A5</accession>
<accession>X2BPC4</accession>
<protein>
    <recommendedName>
        <fullName evidence="1">Trehalose-2-sulfate acyltransferase PapA2</fullName>
        <ecNumber evidence="1">2.3.1.288</ecNumber>
    </recommendedName>
    <alternativeName>
        <fullName evidence="1">2-O-sulfo trehalose long-chain-acyltransferase</fullName>
    </alternativeName>
    <alternativeName>
        <fullName>Polyketide synthase-associated protein A2</fullName>
    </alternativeName>
</protein>
<keyword id="KW-0012">Acyltransferase</keyword>
<keyword id="KW-0961">Cell wall biogenesis/degradation</keyword>
<keyword id="KW-0444">Lipid biosynthesis</keyword>
<keyword id="KW-0443">Lipid metabolism</keyword>
<keyword id="KW-1185">Reference proteome</keyword>
<keyword id="KW-0808">Transferase</keyword>
<comment type="function">
    <text evidence="1">Required for the biosynthesis of sulfolipid-1 (SL-1), a major mycobacterial cell wall lipid. Catalyzes the acylation of trehalose-2-sulfate by adding the palmitoyl group at the 2'-position to yield the intermediate trehalose-2-sulfate-2'-palmitate (SL659).</text>
</comment>
<comment type="catalytic activity">
    <reaction evidence="1">
        <text>2-O-sulfo-alpha,alpha-trehalose + hexadecanoyl-CoA = 2-O-sulfo-2'-O-hexadecanoyl-alpha,alpha-trehalose + CoA</text>
        <dbReference type="Rhea" id="RHEA:44060"/>
        <dbReference type="ChEBI" id="CHEBI:57287"/>
        <dbReference type="ChEBI" id="CHEBI:57379"/>
        <dbReference type="ChEBI" id="CHEBI:60091"/>
        <dbReference type="ChEBI" id="CHEBI:60092"/>
        <dbReference type="EC" id="2.3.1.288"/>
    </reaction>
    <physiologicalReaction direction="left-to-right" evidence="1">
        <dbReference type="Rhea" id="RHEA:44061"/>
    </physiologicalReaction>
</comment>
<comment type="similarity">
    <text evidence="2">Belongs to the PapA acyltransferase family.</text>
</comment>
<feature type="chain" id="PRO_0000314660" description="Trehalose-2-sulfate acyltransferase PapA2">
    <location>
        <begin position="1"/>
        <end position="468"/>
    </location>
</feature>
<sequence length="468" mass="52162">MFSITTLRDWTPDPGSIICWHASPTAKAKARQAPISEVPPSYQQAQHLRRYRDHVARGLDMSRLMIFTWDLPGRCNIRAMNYAINAHLRRHDTYHSWFEFDNAEHIVRHTIADPADIEVVQAEHQNMTSAELRHHIATPQPLQWDCFLFGIIQSDDHFTFYASIAHLCVDPMIVGVLFIEIHMMYSALVGGDPPIELPPAGRYDDHCVRQYADTAALTLDSARVRRWVEFAANNDGTLPHFPLPLGDLSVPHTGKLLTETLMDEQQGERFEAACVAAGARFSGGVFACAALAERELTNCETFDVVTTTDTRRTPTELRTTGWFTGLVPITVPVASGLFDSAARVAQISFDSGKDLATVPFDRVLELARPETGLRPPRPGNFVMSFLDASIAPLSTVANSDLNFRIYDEGRVSHQVSMWVNRYQHQTTVTVLFPDNPIASESVANYIAAMKSIYIRTADGTLAILKPGT</sequence>
<organism>
    <name type="scientific">Mycobacterium bovis (strain ATCC BAA-935 / AF2122/97)</name>
    <dbReference type="NCBI Taxonomy" id="233413"/>
    <lineage>
        <taxon>Bacteria</taxon>
        <taxon>Bacillati</taxon>
        <taxon>Actinomycetota</taxon>
        <taxon>Actinomycetes</taxon>
        <taxon>Mycobacteriales</taxon>
        <taxon>Mycobacteriaceae</taxon>
        <taxon>Mycobacterium</taxon>
        <taxon>Mycobacterium tuberculosis complex</taxon>
    </lineage>
</organism>
<reference key="1">
    <citation type="journal article" date="2003" name="Proc. Natl. Acad. Sci. U.S.A.">
        <title>The complete genome sequence of Mycobacterium bovis.</title>
        <authorList>
            <person name="Garnier T."/>
            <person name="Eiglmeier K."/>
            <person name="Camus J.-C."/>
            <person name="Medina N."/>
            <person name="Mansoor H."/>
            <person name="Pryor M."/>
            <person name="Duthoy S."/>
            <person name="Grondin S."/>
            <person name="Lacroix C."/>
            <person name="Monsempe C."/>
            <person name="Simon S."/>
            <person name="Harris B."/>
            <person name="Atkin R."/>
            <person name="Doggett J."/>
            <person name="Mayes R."/>
            <person name="Keating L."/>
            <person name="Wheeler P.R."/>
            <person name="Parkhill J."/>
            <person name="Barrell B.G."/>
            <person name="Cole S.T."/>
            <person name="Gordon S.V."/>
            <person name="Hewinson R.G."/>
        </authorList>
    </citation>
    <scope>NUCLEOTIDE SEQUENCE [LARGE SCALE GENOMIC DNA]</scope>
    <source>
        <strain>ATCC BAA-935 / AF2122/97</strain>
    </source>
</reference>
<reference key="2">
    <citation type="journal article" date="2017" name="Genome Announc.">
        <title>Updated reference genome sequence and annotation of Mycobacterium bovis AF2122/97.</title>
        <authorList>
            <person name="Malone K.M."/>
            <person name="Farrell D."/>
            <person name="Stuber T.P."/>
            <person name="Schubert O.T."/>
            <person name="Aebersold R."/>
            <person name="Robbe-Austerman S."/>
            <person name="Gordon S.V."/>
        </authorList>
    </citation>
    <scope>NUCLEOTIDE SEQUENCE [LARGE SCALE GENOMIC DNA]</scope>
    <scope>GENOME REANNOTATION</scope>
    <source>
        <strain>ATCC BAA-935 / AF2122/97</strain>
    </source>
</reference>